<sequence length="191" mass="20729">MAEPLLVVGLGNPGENYARTRHNLGFMVADLLAARLGAKFKVHKRSGAEVVTGRLAQRSVVLAKPRCYMNESGRQVAPLAKFYSVPPADLIVIHDELDLDFGRIRLKFGGGEGGHNGLRSVAAALGTKDFQRVRIGIGRPPGRKDPATFVLENFSSPERPEVPTICEQAADATELLVEIGLEPAQNRVHAW</sequence>
<evidence type="ECO:0000255" key="1">
    <source>
        <dbReference type="HAMAP-Rule" id="MF_00083"/>
    </source>
</evidence>
<proteinExistence type="inferred from homology"/>
<gene>
    <name evidence="1" type="primary">pth</name>
    <name type="ordered locus">MMAR_4473</name>
</gene>
<feature type="chain" id="PRO_1000092961" description="Peptidyl-tRNA hydrolase">
    <location>
        <begin position="1"/>
        <end position="191"/>
    </location>
</feature>
<feature type="active site" description="Proton acceptor" evidence="1">
    <location>
        <position position="22"/>
    </location>
</feature>
<feature type="binding site" evidence="1">
    <location>
        <position position="17"/>
    </location>
    <ligand>
        <name>tRNA</name>
        <dbReference type="ChEBI" id="CHEBI:17843"/>
    </ligand>
</feature>
<feature type="binding site" evidence="1">
    <location>
        <position position="68"/>
    </location>
    <ligand>
        <name>tRNA</name>
        <dbReference type="ChEBI" id="CHEBI:17843"/>
    </ligand>
</feature>
<feature type="binding site" evidence="1">
    <location>
        <position position="70"/>
    </location>
    <ligand>
        <name>tRNA</name>
        <dbReference type="ChEBI" id="CHEBI:17843"/>
    </ligand>
</feature>
<feature type="binding site" evidence="1">
    <location>
        <position position="116"/>
    </location>
    <ligand>
        <name>tRNA</name>
        <dbReference type="ChEBI" id="CHEBI:17843"/>
    </ligand>
</feature>
<feature type="site" description="Discriminates between blocked and unblocked aminoacyl-tRNA" evidence="1">
    <location>
        <position position="12"/>
    </location>
</feature>
<feature type="site" description="Stabilizes the basic form of H active site to accept a proton" evidence="1">
    <location>
        <position position="95"/>
    </location>
</feature>
<organism>
    <name type="scientific">Mycobacterium marinum (strain ATCC BAA-535 / M)</name>
    <dbReference type="NCBI Taxonomy" id="216594"/>
    <lineage>
        <taxon>Bacteria</taxon>
        <taxon>Bacillati</taxon>
        <taxon>Actinomycetota</taxon>
        <taxon>Actinomycetes</taxon>
        <taxon>Mycobacteriales</taxon>
        <taxon>Mycobacteriaceae</taxon>
        <taxon>Mycobacterium</taxon>
        <taxon>Mycobacterium ulcerans group</taxon>
    </lineage>
</organism>
<protein>
    <recommendedName>
        <fullName evidence="1">Peptidyl-tRNA hydrolase</fullName>
        <shortName evidence="1">Pth</shortName>
        <ecNumber evidence="1">3.1.1.29</ecNumber>
    </recommendedName>
</protein>
<accession>B2HDJ5</accession>
<reference key="1">
    <citation type="journal article" date="2008" name="Genome Res.">
        <title>Insights from the complete genome sequence of Mycobacterium marinum on the evolution of Mycobacterium tuberculosis.</title>
        <authorList>
            <person name="Stinear T.P."/>
            <person name="Seemann T."/>
            <person name="Harrison P.F."/>
            <person name="Jenkin G.A."/>
            <person name="Davies J.K."/>
            <person name="Johnson P.D."/>
            <person name="Abdellah Z."/>
            <person name="Arrowsmith C."/>
            <person name="Chillingworth T."/>
            <person name="Churcher C."/>
            <person name="Clarke K."/>
            <person name="Cronin A."/>
            <person name="Davis P."/>
            <person name="Goodhead I."/>
            <person name="Holroyd N."/>
            <person name="Jagels K."/>
            <person name="Lord A."/>
            <person name="Moule S."/>
            <person name="Mungall K."/>
            <person name="Norbertczak H."/>
            <person name="Quail M.A."/>
            <person name="Rabbinowitsch E."/>
            <person name="Walker D."/>
            <person name="White B."/>
            <person name="Whitehead S."/>
            <person name="Small P.L."/>
            <person name="Brosch R."/>
            <person name="Ramakrishnan L."/>
            <person name="Fischbach M.A."/>
            <person name="Parkhill J."/>
            <person name="Cole S.T."/>
        </authorList>
    </citation>
    <scope>NUCLEOTIDE SEQUENCE [LARGE SCALE GENOMIC DNA]</scope>
    <source>
        <strain>ATCC BAA-535 / M</strain>
    </source>
</reference>
<name>PTH_MYCMM</name>
<keyword id="KW-0963">Cytoplasm</keyword>
<keyword id="KW-0378">Hydrolase</keyword>
<keyword id="KW-1185">Reference proteome</keyword>
<keyword id="KW-0694">RNA-binding</keyword>
<keyword id="KW-0820">tRNA-binding</keyword>
<dbReference type="EC" id="3.1.1.29" evidence="1"/>
<dbReference type="EMBL" id="CP000854">
    <property type="protein sequence ID" value="ACC42879.1"/>
    <property type="molecule type" value="Genomic_DNA"/>
</dbReference>
<dbReference type="RefSeq" id="WP_012396025.1">
    <property type="nucleotide sequence ID" value="NC_010612.1"/>
</dbReference>
<dbReference type="SMR" id="B2HDJ5"/>
<dbReference type="STRING" id="216594.MMAR_4473"/>
<dbReference type="KEGG" id="mmi:MMAR_4473"/>
<dbReference type="eggNOG" id="COG0193">
    <property type="taxonomic scope" value="Bacteria"/>
</dbReference>
<dbReference type="HOGENOM" id="CLU_062456_2_2_11"/>
<dbReference type="OrthoDB" id="9800507at2"/>
<dbReference type="Proteomes" id="UP000001190">
    <property type="component" value="Chromosome"/>
</dbReference>
<dbReference type="GO" id="GO:0005737">
    <property type="term" value="C:cytoplasm"/>
    <property type="evidence" value="ECO:0007669"/>
    <property type="project" value="UniProtKB-SubCell"/>
</dbReference>
<dbReference type="GO" id="GO:0004045">
    <property type="term" value="F:peptidyl-tRNA hydrolase activity"/>
    <property type="evidence" value="ECO:0007669"/>
    <property type="project" value="UniProtKB-UniRule"/>
</dbReference>
<dbReference type="GO" id="GO:0000049">
    <property type="term" value="F:tRNA binding"/>
    <property type="evidence" value="ECO:0007669"/>
    <property type="project" value="UniProtKB-UniRule"/>
</dbReference>
<dbReference type="GO" id="GO:0006515">
    <property type="term" value="P:protein quality control for misfolded or incompletely synthesized proteins"/>
    <property type="evidence" value="ECO:0007669"/>
    <property type="project" value="UniProtKB-UniRule"/>
</dbReference>
<dbReference type="GO" id="GO:0072344">
    <property type="term" value="P:rescue of stalled ribosome"/>
    <property type="evidence" value="ECO:0007669"/>
    <property type="project" value="UniProtKB-UniRule"/>
</dbReference>
<dbReference type="CDD" id="cd00462">
    <property type="entry name" value="PTH"/>
    <property type="match status" value="1"/>
</dbReference>
<dbReference type="FunFam" id="3.40.50.1470:FF:000001">
    <property type="entry name" value="Peptidyl-tRNA hydrolase"/>
    <property type="match status" value="1"/>
</dbReference>
<dbReference type="Gene3D" id="3.40.50.1470">
    <property type="entry name" value="Peptidyl-tRNA hydrolase"/>
    <property type="match status" value="1"/>
</dbReference>
<dbReference type="HAMAP" id="MF_00083">
    <property type="entry name" value="Pept_tRNA_hydro_bact"/>
    <property type="match status" value="1"/>
</dbReference>
<dbReference type="InterPro" id="IPR001328">
    <property type="entry name" value="Pept_tRNA_hydro"/>
</dbReference>
<dbReference type="InterPro" id="IPR018171">
    <property type="entry name" value="Pept_tRNA_hydro_CS"/>
</dbReference>
<dbReference type="InterPro" id="IPR036416">
    <property type="entry name" value="Pept_tRNA_hydro_sf"/>
</dbReference>
<dbReference type="NCBIfam" id="TIGR00447">
    <property type="entry name" value="pth"/>
    <property type="match status" value="1"/>
</dbReference>
<dbReference type="PANTHER" id="PTHR17224">
    <property type="entry name" value="PEPTIDYL-TRNA HYDROLASE"/>
    <property type="match status" value="1"/>
</dbReference>
<dbReference type="PANTHER" id="PTHR17224:SF1">
    <property type="entry name" value="PEPTIDYL-TRNA HYDROLASE"/>
    <property type="match status" value="1"/>
</dbReference>
<dbReference type="Pfam" id="PF01195">
    <property type="entry name" value="Pept_tRNA_hydro"/>
    <property type="match status" value="1"/>
</dbReference>
<dbReference type="SUPFAM" id="SSF53178">
    <property type="entry name" value="Peptidyl-tRNA hydrolase-like"/>
    <property type="match status" value="1"/>
</dbReference>
<dbReference type="PROSITE" id="PS01195">
    <property type="entry name" value="PEPT_TRNA_HYDROL_1"/>
    <property type="match status" value="1"/>
</dbReference>
<dbReference type="PROSITE" id="PS01196">
    <property type="entry name" value="PEPT_TRNA_HYDROL_2"/>
    <property type="match status" value="1"/>
</dbReference>
<comment type="function">
    <text evidence="1">Hydrolyzes ribosome-free peptidyl-tRNAs (with 1 or more amino acids incorporated), which drop off the ribosome during protein synthesis, or as a result of ribosome stalling.</text>
</comment>
<comment type="function">
    <text evidence="1">Catalyzes the release of premature peptidyl moieties from peptidyl-tRNA molecules trapped in stalled 50S ribosomal subunits, and thus maintains levels of free tRNAs and 50S ribosomes.</text>
</comment>
<comment type="catalytic activity">
    <reaction evidence="1">
        <text>an N-acyl-L-alpha-aminoacyl-tRNA + H2O = an N-acyl-L-amino acid + a tRNA + H(+)</text>
        <dbReference type="Rhea" id="RHEA:54448"/>
        <dbReference type="Rhea" id="RHEA-COMP:10123"/>
        <dbReference type="Rhea" id="RHEA-COMP:13883"/>
        <dbReference type="ChEBI" id="CHEBI:15377"/>
        <dbReference type="ChEBI" id="CHEBI:15378"/>
        <dbReference type="ChEBI" id="CHEBI:59874"/>
        <dbReference type="ChEBI" id="CHEBI:78442"/>
        <dbReference type="ChEBI" id="CHEBI:138191"/>
        <dbReference type="EC" id="3.1.1.29"/>
    </reaction>
</comment>
<comment type="subunit">
    <text evidence="1">Monomer.</text>
</comment>
<comment type="subcellular location">
    <subcellularLocation>
        <location evidence="1">Cytoplasm</location>
    </subcellularLocation>
</comment>
<comment type="similarity">
    <text evidence="1">Belongs to the PTH family.</text>
</comment>